<comment type="subcellular location">
    <subcellularLocation>
        <location evidence="1">Cytoplasm</location>
        <location evidence="1">Nucleoid</location>
    </subcellularLocation>
</comment>
<comment type="similarity">
    <text evidence="1">Belongs to the YejK family.</text>
</comment>
<evidence type="ECO:0000255" key="1">
    <source>
        <dbReference type="HAMAP-Rule" id="MF_00730"/>
    </source>
</evidence>
<proteinExistence type="inferred from homology"/>
<dbReference type="EMBL" id="CT573326">
    <property type="protein sequence ID" value="CAK17132.1"/>
    <property type="molecule type" value="Genomic_DNA"/>
</dbReference>
<dbReference type="RefSeq" id="WP_011535503.1">
    <property type="nucleotide sequence ID" value="NC_008027.1"/>
</dbReference>
<dbReference type="SMR" id="Q1I5F3"/>
<dbReference type="STRING" id="384676.PSEEN4449"/>
<dbReference type="GeneID" id="32807446"/>
<dbReference type="KEGG" id="pen:PSEEN4449"/>
<dbReference type="eggNOG" id="COG3081">
    <property type="taxonomic scope" value="Bacteria"/>
</dbReference>
<dbReference type="HOGENOM" id="CLU_063050_0_1_6"/>
<dbReference type="OrthoDB" id="9131762at2"/>
<dbReference type="Proteomes" id="UP000000658">
    <property type="component" value="Chromosome"/>
</dbReference>
<dbReference type="GO" id="GO:0043590">
    <property type="term" value="C:bacterial nucleoid"/>
    <property type="evidence" value="ECO:0007669"/>
    <property type="project" value="TreeGrafter"/>
</dbReference>
<dbReference type="GO" id="GO:0005737">
    <property type="term" value="C:cytoplasm"/>
    <property type="evidence" value="ECO:0007669"/>
    <property type="project" value="UniProtKB-UniRule"/>
</dbReference>
<dbReference type="GO" id="GO:0003690">
    <property type="term" value="F:double-stranded DNA binding"/>
    <property type="evidence" value="ECO:0007669"/>
    <property type="project" value="TreeGrafter"/>
</dbReference>
<dbReference type="GO" id="GO:0003727">
    <property type="term" value="F:single-stranded RNA binding"/>
    <property type="evidence" value="ECO:0007669"/>
    <property type="project" value="TreeGrafter"/>
</dbReference>
<dbReference type="HAMAP" id="MF_00730">
    <property type="entry name" value="NdpA"/>
    <property type="match status" value="1"/>
</dbReference>
<dbReference type="InterPro" id="IPR007358">
    <property type="entry name" value="Nucleoid_associated_NdpA"/>
</dbReference>
<dbReference type="NCBIfam" id="NF001557">
    <property type="entry name" value="PRK00378.1"/>
    <property type="match status" value="1"/>
</dbReference>
<dbReference type="PANTHER" id="PTHR38772">
    <property type="match status" value="1"/>
</dbReference>
<dbReference type="PANTHER" id="PTHR38772:SF1">
    <property type="entry name" value="NUCLEOID-ASSOCIATED PROTEIN YEJK"/>
    <property type="match status" value="1"/>
</dbReference>
<dbReference type="Pfam" id="PF04245">
    <property type="entry name" value="NA37"/>
    <property type="match status" value="1"/>
</dbReference>
<protein>
    <recommendedName>
        <fullName evidence="1">Nucleoid-associated protein PSEEN4449</fullName>
    </recommendedName>
</protein>
<gene>
    <name type="ordered locus">PSEEN4449</name>
</gene>
<accession>Q1I5F3</accession>
<sequence>MPIRHCIVHLIDKKPDGSPAVLHARDSELAASDAIENLLADLNDSYNAKQGKAWGLFHGESGAYPFSGWLKQYLDEEKDFATFSRVAIEHLQKLMEESNLSTGGHVLFAHYQQGMTEYLAIALLHHSEGVAVNAELDVTPSRHLDLGQLHLAARVNLSEWKNNQNSKQYISFIKGKNGKKVSDYFRDFIGCQEGVDGPGETRTLLKAFSDFVEKEDLPEESAREKTQTLVDYATTQTKLGEPVTLEELSSLIDEDRPEAFYDHIRNSDYGLSPEIPADKRTLNQFRRFTGRAEGLSISFEAHLLGSKVEYDEEAGTLVIKGLPTQLIDQLKRRKD</sequence>
<feature type="chain" id="PRO_1000045933" description="Nucleoid-associated protein PSEEN4449">
    <location>
        <begin position="1"/>
        <end position="335"/>
    </location>
</feature>
<reference key="1">
    <citation type="journal article" date="2006" name="Nat. Biotechnol.">
        <title>Complete genome sequence of the entomopathogenic and metabolically versatile soil bacterium Pseudomonas entomophila.</title>
        <authorList>
            <person name="Vodovar N."/>
            <person name="Vallenet D."/>
            <person name="Cruveiller S."/>
            <person name="Rouy Z."/>
            <person name="Barbe V."/>
            <person name="Acosta C."/>
            <person name="Cattolico L."/>
            <person name="Jubin C."/>
            <person name="Lajus A."/>
            <person name="Segurens B."/>
            <person name="Vacherie B."/>
            <person name="Wincker P."/>
            <person name="Weissenbach J."/>
            <person name="Lemaitre B."/>
            <person name="Medigue C."/>
            <person name="Boccard F."/>
        </authorList>
    </citation>
    <scope>NUCLEOTIDE SEQUENCE [LARGE SCALE GENOMIC DNA]</scope>
    <source>
        <strain>L48</strain>
    </source>
</reference>
<keyword id="KW-0963">Cytoplasm</keyword>
<name>NDPA_PSEE4</name>
<organism>
    <name type="scientific">Pseudomonas entomophila (strain L48)</name>
    <dbReference type="NCBI Taxonomy" id="384676"/>
    <lineage>
        <taxon>Bacteria</taxon>
        <taxon>Pseudomonadati</taxon>
        <taxon>Pseudomonadota</taxon>
        <taxon>Gammaproteobacteria</taxon>
        <taxon>Pseudomonadales</taxon>
        <taxon>Pseudomonadaceae</taxon>
        <taxon>Pseudomonas</taxon>
    </lineage>
</organism>